<sequence>MNIFNQLKQDIIVASRQLYNNQEIANTATIEIPKDSFNGDLSSNIAMIIAAKESIAPREVALKFKEVLITLPYIASIEIAGPGFINFTIKADSWQASIKDILQHEEKFFEIDIDKSKNINIEYVSANPTGPMHIGHARGAIYGDVLARILQKVSYSVTKEYYVNDAGSQINDLVSTVLLRYKEALGEQITIPAGLYPGEYLIPLGQILAKEYGNKLLTMNYAERFKIIKSFAVEKMLDLNRKDLADLGIKHDIFFSEQSLHDKGEIEETVKLLERMGLIYEGTLPAPKGKIHEEWDNRVQKLFKSTKYGDSQDRPIEKADGSWSYFASDLAYAKDKIERGANHLIYVLGADHSGYVKRIEAIVKALGKEQVKVDVKICQLVNFVENGVPVKMSKRLGSFASVQDVNHEVGKDIIRFMMLTRQNDKPLDFDLVKVKEQSRENPIFYVQYAHVRTISILSKAKELMPESYNNFESGKYDLSLLSSEEEIEIIKLLASWTKTLEASAKYFEPHRIAFYLINLASKFHSMWNFGKENSDYRFVIESNKELTLARLALASAIQKVIASGLEVIGVEPMNKM</sequence>
<proteinExistence type="inferred from homology"/>
<protein>
    <recommendedName>
        <fullName evidence="1">Arginine--tRNA ligase</fullName>
        <ecNumber evidence="1">6.1.1.19</ecNumber>
    </recommendedName>
    <alternativeName>
        <fullName evidence="1">Arginyl-tRNA synthetase</fullName>
        <shortName evidence="1">ArgRS</shortName>
    </alternativeName>
</protein>
<gene>
    <name evidence="1" type="primary">argS</name>
    <name type="ordered locus">RAF_ORF0089</name>
</gene>
<evidence type="ECO:0000255" key="1">
    <source>
        <dbReference type="HAMAP-Rule" id="MF_00123"/>
    </source>
</evidence>
<organism>
    <name type="scientific">Rickettsia africae (strain ESF-5)</name>
    <dbReference type="NCBI Taxonomy" id="347255"/>
    <lineage>
        <taxon>Bacteria</taxon>
        <taxon>Pseudomonadati</taxon>
        <taxon>Pseudomonadota</taxon>
        <taxon>Alphaproteobacteria</taxon>
        <taxon>Rickettsiales</taxon>
        <taxon>Rickettsiaceae</taxon>
        <taxon>Rickettsieae</taxon>
        <taxon>Rickettsia</taxon>
        <taxon>spotted fever group</taxon>
    </lineage>
</organism>
<dbReference type="EC" id="6.1.1.19" evidence="1"/>
<dbReference type="EMBL" id="CP001612">
    <property type="protein sequence ID" value="ACP53064.1"/>
    <property type="molecule type" value="Genomic_DNA"/>
</dbReference>
<dbReference type="RefSeq" id="WP_012719361.1">
    <property type="nucleotide sequence ID" value="NC_012633.1"/>
</dbReference>
<dbReference type="SMR" id="C3PMA4"/>
<dbReference type="KEGG" id="raf:RAF_ORF0089"/>
<dbReference type="HOGENOM" id="CLU_006406_0_1_5"/>
<dbReference type="Proteomes" id="UP000002305">
    <property type="component" value="Chromosome"/>
</dbReference>
<dbReference type="GO" id="GO:0005737">
    <property type="term" value="C:cytoplasm"/>
    <property type="evidence" value="ECO:0007669"/>
    <property type="project" value="UniProtKB-SubCell"/>
</dbReference>
<dbReference type="GO" id="GO:0004814">
    <property type="term" value="F:arginine-tRNA ligase activity"/>
    <property type="evidence" value="ECO:0007669"/>
    <property type="project" value="UniProtKB-UniRule"/>
</dbReference>
<dbReference type="GO" id="GO:0005524">
    <property type="term" value="F:ATP binding"/>
    <property type="evidence" value="ECO:0007669"/>
    <property type="project" value="UniProtKB-UniRule"/>
</dbReference>
<dbReference type="GO" id="GO:0006420">
    <property type="term" value="P:arginyl-tRNA aminoacylation"/>
    <property type="evidence" value="ECO:0007669"/>
    <property type="project" value="UniProtKB-UniRule"/>
</dbReference>
<dbReference type="CDD" id="cd00671">
    <property type="entry name" value="ArgRS_core"/>
    <property type="match status" value="1"/>
</dbReference>
<dbReference type="Gene3D" id="3.30.1360.70">
    <property type="entry name" value="Arginyl tRNA synthetase N-terminal domain"/>
    <property type="match status" value="1"/>
</dbReference>
<dbReference type="Gene3D" id="3.40.50.620">
    <property type="entry name" value="HUPs"/>
    <property type="match status" value="1"/>
</dbReference>
<dbReference type="Gene3D" id="1.10.730.10">
    <property type="entry name" value="Isoleucyl-tRNA Synthetase, Domain 1"/>
    <property type="match status" value="1"/>
</dbReference>
<dbReference type="HAMAP" id="MF_00123">
    <property type="entry name" value="Arg_tRNA_synth"/>
    <property type="match status" value="1"/>
</dbReference>
<dbReference type="InterPro" id="IPR001412">
    <property type="entry name" value="aa-tRNA-synth_I_CS"/>
</dbReference>
<dbReference type="InterPro" id="IPR001278">
    <property type="entry name" value="Arg-tRNA-ligase"/>
</dbReference>
<dbReference type="InterPro" id="IPR005148">
    <property type="entry name" value="Arg-tRNA-synth_N"/>
</dbReference>
<dbReference type="InterPro" id="IPR036695">
    <property type="entry name" value="Arg-tRNA-synth_N_sf"/>
</dbReference>
<dbReference type="InterPro" id="IPR035684">
    <property type="entry name" value="ArgRS_core"/>
</dbReference>
<dbReference type="InterPro" id="IPR008909">
    <property type="entry name" value="DALR_anticod-bd"/>
</dbReference>
<dbReference type="InterPro" id="IPR014729">
    <property type="entry name" value="Rossmann-like_a/b/a_fold"/>
</dbReference>
<dbReference type="InterPro" id="IPR009080">
    <property type="entry name" value="tRNAsynth_Ia_anticodon-bd"/>
</dbReference>
<dbReference type="NCBIfam" id="TIGR00456">
    <property type="entry name" value="argS"/>
    <property type="match status" value="1"/>
</dbReference>
<dbReference type="PANTHER" id="PTHR11956:SF5">
    <property type="entry name" value="ARGININE--TRNA LIGASE, CYTOPLASMIC"/>
    <property type="match status" value="1"/>
</dbReference>
<dbReference type="PANTHER" id="PTHR11956">
    <property type="entry name" value="ARGINYL-TRNA SYNTHETASE"/>
    <property type="match status" value="1"/>
</dbReference>
<dbReference type="Pfam" id="PF03485">
    <property type="entry name" value="Arg_tRNA_synt_N"/>
    <property type="match status" value="1"/>
</dbReference>
<dbReference type="Pfam" id="PF05746">
    <property type="entry name" value="DALR_1"/>
    <property type="match status" value="1"/>
</dbReference>
<dbReference type="Pfam" id="PF00750">
    <property type="entry name" value="tRNA-synt_1d"/>
    <property type="match status" value="1"/>
</dbReference>
<dbReference type="PRINTS" id="PR01038">
    <property type="entry name" value="TRNASYNTHARG"/>
</dbReference>
<dbReference type="SMART" id="SM01016">
    <property type="entry name" value="Arg_tRNA_synt_N"/>
    <property type="match status" value="1"/>
</dbReference>
<dbReference type="SMART" id="SM00836">
    <property type="entry name" value="DALR_1"/>
    <property type="match status" value="1"/>
</dbReference>
<dbReference type="SUPFAM" id="SSF47323">
    <property type="entry name" value="Anticodon-binding domain of a subclass of class I aminoacyl-tRNA synthetases"/>
    <property type="match status" value="1"/>
</dbReference>
<dbReference type="SUPFAM" id="SSF55190">
    <property type="entry name" value="Arginyl-tRNA synthetase (ArgRS), N-terminal 'additional' domain"/>
    <property type="match status" value="1"/>
</dbReference>
<dbReference type="SUPFAM" id="SSF52374">
    <property type="entry name" value="Nucleotidylyl transferase"/>
    <property type="match status" value="1"/>
</dbReference>
<dbReference type="PROSITE" id="PS00178">
    <property type="entry name" value="AA_TRNA_LIGASE_I"/>
    <property type="match status" value="1"/>
</dbReference>
<keyword id="KW-0030">Aminoacyl-tRNA synthetase</keyword>
<keyword id="KW-0067">ATP-binding</keyword>
<keyword id="KW-0963">Cytoplasm</keyword>
<keyword id="KW-0436">Ligase</keyword>
<keyword id="KW-0547">Nucleotide-binding</keyword>
<keyword id="KW-0648">Protein biosynthesis</keyword>
<name>SYR_RICAE</name>
<accession>C3PMA4</accession>
<comment type="catalytic activity">
    <reaction evidence="1">
        <text>tRNA(Arg) + L-arginine + ATP = L-arginyl-tRNA(Arg) + AMP + diphosphate</text>
        <dbReference type="Rhea" id="RHEA:20301"/>
        <dbReference type="Rhea" id="RHEA-COMP:9658"/>
        <dbReference type="Rhea" id="RHEA-COMP:9673"/>
        <dbReference type="ChEBI" id="CHEBI:30616"/>
        <dbReference type="ChEBI" id="CHEBI:32682"/>
        <dbReference type="ChEBI" id="CHEBI:33019"/>
        <dbReference type="ChEBI" id="CHEBI:78442"/>
        <dbReference type="ChEBI" id="CHEBI:78513"/>
        <dbReference type="ChEBI" id="CHEBI:456215"/>
        <dbReference type="EC" id="6.1.1.19"/>
    </reaction>
</comment>
<comment type="subunit">
    <text evidence="1">Monomer.</text>
</comment>
<comment type="subcellular location">
    <subcellularLocation>
        <location evidence="1">Cytoplasm</location>
    </subcellularLocation>
</comment>
<comment type="similarity">
    <text evidence="1">Belongs to the class-I aminoacyl-tRNA synthetase family.</text>
</comment>
<reference key="1">
    <citation type="journal article" date="2009" name="BMC Genomics">
        <title>Analysis of the Rickettsia africae genome reveals that virulence acquisition in Rickettsia species may be explained by genome reduction.</title>
        <authorList>
            <person name="Fournier P.-E."/>
            <person name="El Karkouri K."/>
            <person name="Leroy Q."/>
            <person name="Robert C."/>
            <person name="Giumelli B."/>
            <person name="Renesto P."/>
            <person name="Socolovschi C."/>
            <person name="Parola P."/>
            <person name="Audic S."/>
            <person name="Raoult D."/>
        </authorList>
    </citation>
    <scope>NUCLEOTIDE SEQUENCE [LARGE SCALE GENOMIC DNA]</scope>
    <source>
        <strain>ESF-5</strain>
    </source>
</reference>
<feature type="chain" id="PRO_1000203104" description="Arginine--tRNA ligase">
    <location>
        <begin position="1"/>
        <end position="576"/>
    </location>
</feature>
<feature type="short sequence motif" description="'HIGH' region">
    <location>
        <begin position="126"/>
        <end position="136"/>
    </location>
</feature>